<reference key="1">
    <citation type="journal article" date="1995" name="Cell">
        <title>In vitro guidance of retinal ganglion cell axons by RAGS, a 25 kDa tectal protein related to ligands for Eph receptor tyrosine kinases.</title>
        <authorList>
            <person name="Drescher U."/>
            <person name="Kremoser C."/>
            <person name="Handwerker C."/>
            <person name="Loschinger J."/>
            <person name="Noda M."/>
            <person name="Bonhoeffer F."/>
        </authorList>
    </citation>
    <scope>NUCLEOTIDE SEQUENCE [MRNA]</scope>
    <source>
        <tissue>Posterior tectum</tissue>
    </source>
</reference>
<dbReference type="EMBL" id="X90377">
    <property type="protein sequence ID" value="CAA62027.1"/>
    <property type="molecule type" value="mRNA"/>
</dbReference>
<dbReference type="PIR" id="A57084">
    <property type="entry name" value="A57084"/>
</dbReference>
<dbReference type="RefSeq" id="NP_990515.1">
    <property type="nucleotide sequence ID" value="NM_205184.2"/>
</dbReference>
<dbReference type="SMR" id="P52804"/>
<dbReference type="FunCoup" id="P52804">
    <property type="interactions" value="346"/>
</dbReference>
<dbReference type="STRING" id="9031.ENSGALP00000058467"/>
<dbReference type="GlyCosmos" id="P52804">
    <property type="glycosylation" value="1 site, No reported glycans"/>
</dbReference>
<dbReference type="GlyGen" id="P52804">
    <property type="glycosylation" value="1 site"/>
</dbReference>
<dbReference type="PaxDb" id="9031-ENSGALP00000000368"/>
<dbReference type="GeneID" id="396100"/>
<dbReference type="KEGG" id="gga:396100"/>
<dbReference type="CTD" id="1946"/>
<dbReference type="VEuPathDB" id="HostDB:geneid_396100"/>
<dbReference type="eggNOG" id="KOG3858">
    <property type="taxonomic scope" value="Eukaryota"/>
</dbReference>
<dbReference type="InParanoid" id="P52804"/>
<dbReference type="OrthoDB" id="6250301at2759"/>
<dbReference type="PhylomeDB" id="P52804"/>
<dbReference type="PRO" id="PR:P52804"/>
<dbReference type="Proteomes" id="UP000000539">
    <property type="component" value="Unassembled WGS sequence"/>
</dbReference>
<dbReference type="GO" id="GO:0009897">
    <property type="term" value="C:external side of plasma membrane"/>
    <property type="evidence" value="ECO:0000250"/>
    <property type="project" value="UniProtKB"/>
</dbReference>
<dbReference type="GO" id="GO:0005886">
    <property type="term" value="C:plasma membrane"/>
    <property type="evidence" value="ECO:0000250"/>
    <property type="project" value="UniProtKB"/>
</dbReference>
<dbReference type="GO" id="GO:0045499">
    <property type="term" value="F:chemorepellent activity"/>
    <property type="evidence" value="ECO:0000250"/>
    <property type="project" value="AgBase"/>
</dbReference>
<dbReference type="GO" id="GO:0046875">
    <property type="term" value="F:ephrin receptor binding"/>
    <property type="evidence" value="ECO:0000250"/>
    <property type="project" value="AgBase"/>
</dbReference>
<dbReference type="GO" id="GO:0007411">
    <property type="term" value="P:axon guidance"/>
    <property type="evidence" value="ECO:0000318"/>
    <property type="project" value="GO_Central"/>
</dbReference>
<dbReference type="GO" id="GO:0007420">
    <property type="term" value="P:brain development"/>
    <property type="evidence" value="ECO:0000250"/>
    <property type="project" value="AgBase"/>
</dbReference>
<dbReference type="GO" id="GO:0048013">
    <property type="term" value="P:ephrin receptor signaling pathway"/>
    <property type="evidence" value="ECO:0000250"/>
    <property type="project" value="UniProtKB"/>
</dbReference>
<dbReference type="GO" id="GO:0050731">
    <property type="term" value="P:positive regulation of peptidyl-tyrosine phosphorylation"/>
    <property type="evidence" value="ECO:0000250"/>
    <property type="project" value="UniProtKB"/>
</dbReference>
<dbReference type="GO" id="GO:0032956">
    <property type="term" value="P:regulation of actin cytoskeleton organization"/>
    <property type="evidence" value="ECO:0000250"/>
    <property type="project" value="UniProtKB"/>
</dbReference>
<dbReference type="GO" id="GO:0022407">
    <property type="term" value="P:regulation of cell-cell adhesion"/>
    <property type="evidence" value="ECO:0000250"/>
    <property type="project" value="UniProtKB"/>
</dbReference>
<dbReference type="GO" id="GO:0051893">
    <property type="term" value="P:regulation of focal adhesion assembly"/>
    <property type="evidence" value="ECO:0000250"/>
    <property type="project" value="UniProtKB"/>
</dbReference>
<dbReference type="GO" id="GO:0043087">
    <property type="term" value="P:regulation of GTPase activity"/>
    <property type="evidence" value="ECO:0000250"/>
    <property type="project" value="UniProtKB"/>
</dbReference>
<dbReference type="GO" id="GO:0070507">
    <property type="term" value="P:regulation of microtubule cytoskeleton organization"/>
    <property type="evidence" value="ECO:0000250"/>
    <property type="project" value="UniProtKB"/>
</dbReference>
<dbReference type="GO" id="GO:0031290">
    <property type="term" value="P:retinal ganglion cell axon guidance"/>
    <property type="evidence" value="ECO:0000250"/>
    <property type="project" value="AgBase"/>
</dbReference>
<dbReference type="CDD" id="cd10425">
    <property type="entry name" value="Ephrin-A_Ectodomain"/>
    <property type="match status" value="1"/>
</dbReference>
<dbReference type="FunFam" id="2.60.40.420:FF:000005">
    <property type="entry name" value="Ephrin A5"/>
    <property type="match status" value="1"/>
</dbReference>
<dbReference type="Gene3D" id="2.60.40.420">
    <property type="entry name" value="Cupredoxins - blue copper proteins"/>
    <property type="match status" value="1"/>
</dbReference>
<dbReference type="InterPro" id="IPR008972">
    <property type="entry name" value="Cupredoxin"/>
</dbReference>
<dbReference type="InterPro" id="IPR031328">
    <property type="entry name" value="Ephrin"/>
</dbReference>
<dbReference type="InterPro" id="IPR034252">
    <property type="entry name" value="Ephrin-A_Ecto"/>
</dbReference>
<dbReference type="InterPro" id="IPR019765">
    <property type="entry name" value="Ephrin_CS"/>
</dbReference>
<dbReference type="InterPro" id="IPR001799">
    <property type="entry name" value="Ephrin_RBD"/>
</dbReference>
<dbReference type="PANTHER" id="PTHR11304">
    <property type="entry name" value="EPHRIN"/>
    <property type="match status" value="1"/>
</dbReference>
<dbReference type="PANTHER" id="PTHR11304:SF33">
    <property type="entry name" value="EPHRIN-A5"/>
    <property type="match status" value="1"/>
</dbReference>
<dbReference type="Pfam" id="PF00812">
    <property type="entry name" value="Ephrin"/>
    <property type="match status" value="1"/>
</dbReference>
<dbReference type="PRINTS" id="PR01347">
    <property type="entry name" value="EPHRIN"/>
</dbReference>
<dbReference type="SUPFAM" id="SSF49503">
    <property type="entry name" value="Cupredoxins"/>
    <property type="match status" value="1"/>
</dbReference>
<dbReference type="PROSITE" id="PS01299">
    <property type="entry name" value="EPHRIN_RBD_1"/>
    <property type="match status" value="1"/>
</dbReference>
<dbReference type="PROSITE" id="PS51551">
    <property type="entry name" value="EPHRIN_RBD_2"/>
    <property type="match status" value="1"/>
</dbReference>
<keyword id="KW-1003">Cell membrane</keyword>
<keyword id="KW-0217">Developmental protein</keyword>
<keyword id="KW-0221">Differentiation</keyword>
<keyword id="KW-1015">Disulfide bond</keyword>
<keyword id="KW-0325">Glycoprotein</keyword>
<keyword id="KW-0336">GPI-anchor</keyword>
<keyword id="KW-0449">Lipoprotein</keyword>
<keyword id="KW-0472">Membrane</keyword>
<keyword id="KW-0524">Neurogenesis</keyword>
<keyword id="KW-1185">Reference proteome</keyword>
<keyword id="KW-0732">Signal</keyword>
<feature type="signal peptide" evidence="2">
    <location>
        <begin position="1"/>
        <end position="20"/>
    </location>
</feature>
<feature type="chain" id="PRO_0000008383" description="Ephrin-A5">
    <location>
        <begin position="21"/>
        <end position="203"/>
    </location>
</feature>
<feature type="propeptide" id="PRO_0000008384" description="Removed in mature form" evidence="2">
    <location>
        <begin position="204"/>
        <end position="228"/>
    </location>
</feature>
<feature type="domain" description="Ephrin RBD" evidence="3">
    <location>
        <begin position="29"/>
        <end position="162"/>
    </location>
</feature>
<feature type="lipid moiety-binding region" description="GPI-anchor amidated asparagine" evidence="2">
    <location>
        <position position="203"/>
    </location>
</feature>
<feature type="glycosylation site" description="N-linked (GlcNAc...) asparagine" evidence="2">
    <location>
        <position position="37"/>
    </location>
</feature>
<feature type="disulfide bond" evidence="3">
    <location>
        <begin position="62"/>
        <end position="102"/>
    </location>
</feature>
<feature type="disulfide bond" evidence="3">
    <location>
        <begin position="90"/>
        <end position="151"/>
    </location>
</feature>
<evidence type="ECO:0000250" key="1"/>
<evidence type="ECO:0000255" key="2"/>
<evidence type="ECO:0000255" key="3">
    <source>
        <dbReference type="PROSITE-ProRule" id="PRU00884"/>
    </source>
</evidence>
<evidence type="ECO:0000305" key="4"/>
<name>EFNA5_CHICK</name>
<comment type="function">
    <text evidence="1">Cell surface GPI-bound ligand for Eph receptors, a family of receptor tyrosine kinases which are crucial for migration, repulsion and adhesion during neuronal, vascular and epithelial development. Binds promiscuously Eph receptors residing on adjacent cells, leading to contact-dependent bidirectional signaling into neighboring cells. Induces compartmentalized signaling within a caveolae-like membrane microdomain when bound to the extracellular domain of its cognate receptor. This signaling event requires the activity of the Fyn tyrosine kinase. Activates the EPHA3 receptor to regulate cell-cell adhesion and cytoskeletal organization. With the receptor EPHA2 may regulate lens fiber cells shape and interactions and be important for lens transparency maintenance. May function actively to stimulate axon fasciculation (By similarity). Induces growth cone collapse and repulsion of retinal ganglion cell axons.</text>
</comment>
<comment type="subcellular location">
    <subcellularLocation>
        <location evidence="4">Cell membrane</location>
        <topology evidence="4">Lipid-anchor</topology>
        <topology evidence="4">GPI-anchor</topology>
    </subcellularLocation>
</comment>
<comment type="tissue specificity">
    <text>Expressed in a graded fashion across the tectum being more strongly expressed towards the posterior pole.</text>
</comment>
<comment type="similarity">
    <text evidence="3">Belongs to the ephrin family.</text>
</comment>
<protein>
    <recommendedName>
        <fullName>Ephrin-A5</fullName>
    </recommendedName>
    <alternativeName>
        <fullName>EPH-related receptor tyrosine kinase ligand 7</fullName>
        <shortName>LERK-7</shortName>
    </alternativeName>
    <alternativeName>
        <fullName>Repulsive axon guidance signal protein</fullName>
    </alternativeName>
</protein>
<proteinExistence type="evidence at transcript level"/>
<sequence length="228" mass="26206">MPHVEMLLLAVAALWVCVRGQEPGRKAVADRYAVYWNSTNPRFQQGDYHIDVCINDYLDVFCPHYEDSVPEDKTERYVLYMVNFDGYSSCDHISKGFKRWECNRPHSPNGPLKFSEKFQLFTPFSLGFEFRPGREYFYISSAIPDNGRRSCLKLKVFVRPANSCMKTIGVHDRVFDVNDKVENSLEPADDTVRESAEPSRGENAAQTPRIPIRLLATLLFLLAMLLIL</sequence>
<accession>P52804</accession>
<gene>
    <name type="primary">EFNA5</name>
    <name type="synonym">RAGS</name>
</gene>
<organism>
    <name type="scientific">Gallus gallus</name>
    <name type="common">Chicken</name>
    <dbReference type="NCBI Taxonomy" id="9031"/>
    <lineage>
        <taxon>Eukaryota</taxon>
        <taxon>Metazoa</taxon>
        <taxon>Chordata</taxon>
        <taxon>Craniata</taxon>
        <taxon>Vertebrata</taxon>
        <taxon>Euteleostomi</taxon>
        <taxon>Archelosauria</taxon>
        <taxon>Archosauria</taxon>
        <taxon>Dinosauria</taxon>
        <taxon>Saurischia</taxon>
        <taxon>Theropoda</taxon>
        <taxon>Coelurosauria</taxon>
        <taxon>Aves</taxon>
        <taxon>Neognathae</taxon>
        <taxon>Galloanserae</taxon>
        <taxon>Galliformes</taxon>
        <taxon>Phasianidae</taxon>
        <taxon>Phasianinae</taxon>
        <taxon>Gallus</taxon>
    </lineage>
</organism>